<protein>
    <recommendedName>
        <fullName evidence="1">1-(5-phosphoribosyl)-5-[(5-phosphoribosylamino)methylideneamino] imidazole-4-carboxamide isomerase</fullName>
        <ecNumber evidence="1">5.3.1.16</ecNumber>
    </recommendedName>
    <alternativeName>
        <fullName evidence="1">Phosphoribosylformimino-5-aminoimidazole carboxamide ribotide isomerase</fullName>
    </alternativeName>
</protein>
<evidence type="ECO:0000255" key="1">
    <source>
        <dbReference type="HAMAP-Rule" id="MF_01014"/>
    </source>
</evidence>
<gene>
    <name evidence="1" type="primary">hisA</name>
    <name type="ordered locus">SynWH7803_1163</name>
</gene>
<keyword id="KW-0028">Amino-acid biosynthesis</keyword>
<keyword id="KW-0963">Cytoplasm</keyword>
<keyword id="KW-0368">Histidine biosynthesis</keyword>
<keyword id="KW-0413">Isomerase</keyword>
<keyword id="KW-1185">Reference proteome</keyword>
<sequence length="256" mass="26899">MQIIPAIDLLGGSCVRLHQGDYDKVTRFSDDPVAQALQWQEQGAERLHLVDLDGARTGEPANDSAIRAITSALTIPVQLGGGVRTAERADTLLACGLDRVILGTVALEQPQLVVELADRHPGRVVVGIDARHGKVATKGWIEDSNTEATALAQRFSASAIAAIISTDISTDGTLEGPNLQALREMAEASSVPVIASGGVGCMGDLLALLTLEPLGVEAVIVGRALYDGRIDLGEARKALAESRLQDPPSDLLQDFA</sequence>
<reference key="1">
    <citation type="submission" date="2006-05" db="EMBL/GenBank/DDBJ databases">
        <authorList>
            <consortium name="Genoscope"/>
        </authorList>
    </citation>
    <scope>NUCLEOTIDE SEQUENCE [LARGE SCALE GENOMIC DNA]</scope>
    <source>
        <strain>WH7803</strain>
    </source>
</reference>
<proteinExistence type="inferred from homology"/>
<organism>
    <name type="scientific">Synechococcus sp. (strain WH7803)</name>
    <dbReference type="NCBI Taxonomy" id="32051"/>
    <lineage>
        <taxon>Bacteria</taxon>
        <taxon>Bacillati</taxon>
        <taxon>Cyanobacteriota</taxon>
        <taxon>Cyanophyceae</taxon>
        <taxon>Synechococcales</taxon>
        <taxon>Synechococcaceae</taxon>
        <taxon>Synechococcus</taxon>
    </lineage>
</organism>
<feature type="chain" id="PRO_1000063238" description="1-(5-phosphoribosyl)-5-[(5-phosphoribosylamino)methylideneamino] imidazole-4-carboxamide isomerase">
    <location>
        <begin position="1"/>
        <end position="256"/>
    </location>
</feature>
<feature type="active site" description="Proton acceptor" evidence="1">
    <location>
        <position position="8"/>
    </location>
</feature>
<feature type="active site" description="Proton donor" evidence="1">
    <location>
        <position position="129"/>
    </location>
</feature>
<accession>A5GKX4</accession>
<name>HIS4_SYNPW</name>
<comment type="catalytic activity">
    <reaction evidence="1">
        <text>1-(5-phospho-beta-D-ribosyl)-5-[(5-phospho-beta-D-ribosylamino)methylideneamino]imidazole-4-carboxamide = 5-[(5-phospho-1-deoxy-D-ribulos-1-ylimino)methylamino]-1-(5-phospho-beta-D-ribosyl)imidazole-4-carboxamide</text>
        <dbReference type="Rhea" id="RHEA:15469"/>
        <dbReference type="ChEBI" id="CHEBI:58435"/>
        <dbReference type="ChEBI" id="CHEBI:58525"/>
        <dbReference type="EC" id="5.3.1.16"/>
    </reaction>
</comment>
<comment type="pathway">
    <text evidence="1">Amino-acid biosynthesis; L-histidine biosynthesis; L-histidine from 5-phospho-alpha-D-ribose 1-diphosphate: step 4/9.</text>
</comment>
<comment type="subcellular location">
    <subcellularLocation>
        <location evidence="1">Cytoplasm</location>
    </subcellularLocation>
</comment>
<comment type="similarity">
    <text evidence="1">Belongs to the HisA/HisF family.</text>
</comment>
<dbReference type="EC" id="5.3.1.16" evidence="1"/>
<dbReference type="EMBL" id="CT971583">
    <property type="protein sequence ID" value="CAK23589.1"/>
    <property type="molecule type" value="Genomic_DNA"/>
</dbReference>
<dbReference type="SMR" id="A5GKX4"/>
<dbReference type="STRING" id="32051.SynWH7803_1163"/>
<dbReference type="KEGG" id="syx:SynWH7803_1163"/>
<dbReference type="eggNOG" id="COG0106">
    <property type="taxonomic scope" value="Bacteria"/>
</dbReference>
<dbReference type="HOGENOM" id="CLU_048577_1_1_3"/>
<dbReference type="OrthoDB" id="9807749at2"/>
<dbReference type="UniPathway" id="UPA00031">
    <property type="reaction ID" value="UER00009"/>
</dbReference>
<dbReference type="Proteomes" id="UP000001566">
    <property type="component" value="Chromosome"/>
</dbReference>
<dbReference type="GO" id="GO:0005737">
    <property type="term" value="C:cytoplasm"/>
    <property type="evidence" value="ECO:0007669"/>
    <property type="project" value="UniProtKB-SubCell"/>
</dbReference>
<dbReference type="GO" id="GO:0003949">
    <property type="term" value="F:1-(5-phosphoribosyl)-5-[(5-phosphoribosylamino)methylideneamino]imidazole-4-carboxamide isomerase activity"/>
    <property type="evidence" value="ECO:0007669"/>
    <property type="project" value="UniProtKB-UniRule"/>
</dbReference>
<dbReference type="GO" id="GO:0000105">
    <property type="term" value="P:L-histidine biosynthetic process"/>
    <property type="evidence" value="ECO:0007669"/>
    <property type="project" value="UniProtKB-UniRule"/>
</dbReference>
<dbReference type="GO" id="GO:0000162">
    <property type="term" value="P:L-tryptophan biosynthetic process"/>
    <property type="evidence" value="ECO:0007669"/>
    <property type="project" value="TreeGrafter"/>
</dbReference>
<dbReference type="CDD" id="cd04732">
    <property type="entry name" value="HisA"/>
    <property type="match status" value="1"/>
</dbReference>
<dbReference type="FunFam" id="3.20.20.70:FF:000009">
    <property type="entry name" value="1-(5-phosphoribosyl)-5-[(5-phosphoribosylamino)methylideneamino] imidazole-4-carboxamide isomerase"/>
    <property type="match status" value="1"/>
</dbReference>
<dbReference type="Gene3D" id="3.20.20.70">
    <property type="entry name" value="Aldolase class I"/>
    <property type="match status" value="1"/>
</dbReference>
<dbReference type="HAMAP" id="MF_01014">
    <property type="entry name" value="HisA"/>
    <property type="match status" value="1"/>
</dbReference>
<dbReference type="InterPro" id="IPR013785">
    <property type="entry name" value="Aldolase_TIM"/>
</dbReference>
<dbReference type="InterPro" id="IPR006062">
    <property type="entry name" value="His_biosynth"/>
</dbReference>
<dbReference type="InterPro" id="IPR006063">
    <property type="entry name" value="HisA_bact_arch"/>
</dbReference>
<dbReference type="InterPro" id="IPR044524">
    <property type="entry name" value="Isoase_HisA-like"/>
</dbReference>
<dbReference type="InterPro" id="IPR023016">
    <property type="entry name" value="Isoase_HisA-like_bact"/>
</dbReference>
<dbReference type="InterPro" id="IPR011060">
    <property type="entry name" value="RibuloseP-bd_barrel"/>
</dbReference>
<dbReference type="NCBIfam" id="TIGR00007">
    <property type="entry name" value="1-(5-phosphoribosyl)-5-[(5-phosphoribosylamino)methylideneamino]imidazole-4-carboxamide isomerase"/>
    <property type="match status" value="1"/>
</dbReference>
<dbReference type="NCBIfam" id="NF010112">
    <property type="entry name" value="PRK13585.1"/>
    <property type="match status" value="1"/>
</dbReference>
<dbReference type="PANTHER" id="PTHR43090">
    <property type="entry name" value="1-(5-PHOSPHORIBOSYL)-5-[(5-PHOSPHORIBOSYLAMINO)METHYLIDENEAMINO] IMIDAZOLE-4-CARBOXAMIDE ISOMERASE"/>
    <property type="match status" value="1"/>
</dbReference>
<dbReference type="PANTHER" id="PTHR43090:SF2">
    <property type="entry name" value="1-(5-PHOSPHORIBOSYL)-5-[(5-PHOSPHORIBOSYLAMINO)METHYLIDENEAMINO] IMIDAZOLE-4-CARBOXAMIDE ISOMERASE"/>
    <property type="match status" value="1"/>
</dbReference>
<dbReference type="Pfam" id="PF00977">
    <property type="entry name" value="His_biosynth"/>
    <property type="match status" value="1"/>
</dbReference>
<dbReference type="SUPFAM" id="SSF51366">
    <property type="entry name" value="Ribulose-phoshate binding barrel"/>
    <property type="match status" value="1"/>
</dbReference>